<name>ATPE_GOSBA</name>
<dbReference type="EMBL" id="AP009123">
    <property type="protein sequence ID" value="BAF41253.1"/>
    <property type="molecule type" value="Genomic_DNA"/>
</dbReference>
<dbReference type="RefSeq" id="YP_913193.1">
    <property type="nucleotide sequence ID" value="NC_008641.1"/>
</dbReference>
<dbReference type="SMR" id="A0ZZ41"/>
<dbReference type="GeneID" id="4575186"/>
<dbReference type="OrthoDB" id="975927at2759"/>
<dbReference type="GO" id="GO:0009535">
    <property type="term" value="C:chloroplast thylakoid membrane"/>
    <property type="evidence" value="ECO:0007669"/>
    <property type="project" value="UniProtKB-SubCell"/>
</dbReference>
<dbReference type="GO" id="GO:0045259">
    <property type="term" value="C:proton-transporting ATP synthase complex"/>
    <property type="evidence" value="ECO:0007669"/>
    <property type="project" value="UniProtKB-KW"/>
</dbReference>
<dbReference type="GO" id="GO:0005524">
    <property type="term" value="F:ATP binding"/>
    <property type="evidence" value="ECO:0007669"/>
    <property type="project" value="UniProtKB-UniRule"/>
</dbReference>
<dbReference type="GO" id="GO:0046933">
    <property type="term" value="F:proton-transporting ATP synthase activity, rotational mechanism"/>
    <property type="evidence" value="ECO:0007669"/>
    <property type="project" value="UniProtKB-UniRule"/>
</dbReference>
<dbReference type="CDD" id="cd12152">
    <property type="entry name" value="F1-ATPase_delta"/>
    <property type="match status" value="1"/>
</dbReference>
<dbReference type="FunFam" id="2.60.15.10:FF:000002">
    <property type="entry name" value="ATP synthase epsilon chain, chloroplastic"/>
    <property type="match status" value="1"/>
</dbReference>
<dbReference type="Gene3D" id="6.10.140.480">
    <property type="match status" value="1"/>
</dbReference>
<dbReference type="Gene3D" id="2.60.15.10">
    <property type="entry name" value="F0F1 ATP synthase delta/epsilon subunit, N-terminal"/>
    <property type="match status" value="1"/>
</dbReference>
<dbReference type="HAMAP" id="MF_00530">
    <property type="entry name" value="ATP_synth_epsil_bac"/>
    <property type="match status" value="1"/>
</dbReference>
<dbReference type="InterPro" id="IPR001469">
    <property type="entry name" value="ATP_synth_F1_dsu/esu"/>
</dbReference>
<dbReference type="InterPro" id="IPR020546">
    <property type="entry name" value="ATP_synth_F1_dsu/esu_N"/>
</dbReference>
<dbReference type="InterPro" id="IPR020547">
    <property type="entry name" value="ATP_synth_F1_esu_C"/>
</dbReference>
<dbReference type="InterPro" id="IPR036771">
    <property type="entry name" value="ATPsynth_dsu/esu_N"/>
</dbReference>
<dbReference type="NCBIfam" id="TIGR01216">
    <property type="entry name" value="ATP_synt_epsi"/>
    <property type="match status" value="1"/>
</dbReference>
<dbReference type="PANTHER" id="PTHR13822">
    <property type="entry name" value="ATP SYNTHASE DELTA/EPSILON CHAIN"/>
    <property type="match status" value="1"/>
</dbReference>
<dbReference type="PANTHER" id="PTHR13822:SF10">
    <property type="entry name" value="ATP SYNTHASE EPSILON CHAIN, CHLOROPLASTIC"/>
    <property type="match status" value="1"/>
</dbReference>
<dbReference type="Pfam" id="PF00401">
    <property type="entry name" value="ATP-synt_DE"/>
    <property type="match status" value="1"/>
</dbReference>
<dbReference type="Pfam" id="PF02823">
    <property type="entry name" value="ATP-synt_DE_N"/>
    <property type="match status" value="1"/>
</dbReference>
<dbReference type="SUPFAM" id="SSF51344">
    <property type="entry name" value="Epsilon subunit of F1F0-ATP synthase N-terminal domain"/>
    <property type="match status" value="1"/>
</dbReference>
<comment type="function">
    <text evidence="1">Produces ATP from ADP in the presence of a proton gradient across the membrane.</text>
</comment>
<comment type="subunit">
    <text evidence="1">F-type ATPases have 2 components, CF(1) - the catalytic core - and CF(0) - the membrane proton channel. CF(1) has five subunits: alpha(3), beta(3), gamma(1), delta(1), epsilon(1). CF(0) has three main subunits: a, b and c.</text>
</comment>
<comment type="subcellular location">
    <subcellularLocation>
        <location evidence="1">Plastid</location>
        <location evidence="1">Chloroplast thylakoid membrane</location>
        <topology evidence="1">Peripheral membrane protein</topology>
    </subcellularLocation>
</comment>
<comment type="similarity">
    <text evidence="1">Belongs to the ATPase epsilon chain family.</text>
</comment>
<sequence>MTLNLCVLTPNRIVWDSEVKEIILSTNSGQIGVLPNHAPIATAVDIGILRIRLNDQWLTMALMGGFARIGNNEITILVNDAEKGSDIDPQEAQQALEIAEANLRKAEGKRQTIEANLALRRARTRVEAINAIS</sequence>
<protein>
    <recommendedName>
        <fullName evidence="1">ATP synthase epsilon chain, chloroplastic</fullName>
    </recommendedName>
    <alternativeName>
        <fullName evidence="1">ATP synthase F1 sector epsilon subunit</fullName>
    </alternativeName>
    <alternativeName>
        <fullName evidence="1">F-ATPase epsilon subunit</fullName>
    </alternativeName>
</protein>
<proteinExistence type="inferred from homology"/>
<organism>
    <name type="scientific">Gossypium barbadense</name>
    <name type="common">Sea Island cotton</name>
    <name type="synonym">Hibiscus barbadensis</name>
    <dbReference type="NCBI Taxonomy" id="3634"/>
    <lineage>
        <taxon>Eukaryota</taxon>
        <taxon>Viridiplantae</taxon>
        <taxon>Streptophyta</taxon>
        <taxon>Embryophyta</taxon>
        <taxon>Tracheophyta</taxon>
        <taxon>Spermatophyta</taxon>
        <taxon>Magnoliopsida</taxon>
        <taxon>eudicotyledons</taxon>
        <taxon>Gunneridae</taxon>
        <taxon>Pentapetalae</taxon>
        <taxon>rosids</taxon>
        <taxon>malvids</taxon>
        <taxon>Malvales</taxon>
        <taxon>Malvaceae</taxon>
        <taxon>Malvoideae</taxon>
        <taxon>Gossypium</taxon>
    </lineage>
</organism>
<keyword id="KW-0066">ATP synthesis</keyword>
<keyword id="KW-0139">CF(1)</keyword>
<keyword id="KW-0150">Chloroplast</keyword>
<keyword id="KW-0375">Hydrogen ion transport</keyword>
<keyword id="KW-0406">Ion transport</keyword>
<keyword id="KW-0472">Membrane</keyword>
<keyword id="KW-0934">Plastid</keyword>
<keyword id="KW-0793">Thylakoid</keyword>
<keyword id="KW-0813">Transport</keyword>
<evidence type="ECO:0000255" key="1">
    <source>
        <dbReference type="HAMAP-Rule" id="MF_00530"/>
    </source>
</evidence>
<gene>
    <name evidence="1" type="primary">atpE</name>
</gene>
<geneLocation type="chloroplast"/>
<reference key="1">
    <citation type="journal article" date="2006" name="Genes Genet. Syst.">
        <title>Complete nucleotide sequence of the cotton (Gossypium barbadense L.) chloroplast genome with a comparative analysis of sequences among 9 dicot plants.</title>
        <authorList>
            <person name="Ibrahim R.I.H."/>
            <person name="Azuma J."/>
            <person name="Sakamoto M."/>
        </authorList>
    </citation>
    <scope>NUCLEOTIDE SEQUENCE [LARGE SCALE GENOMIC DNA]</scope>
</reference>
<accession>A0ZZ41</accession>
<feature type="chain" id="PRO_0000275200" description="ATP synthase epsilon chain, chloroplastic">
    <location>
        <begin position="1"/>
        <end position="133"/>
    </location>
</feature>